<comment type="function">
    <text evidence="1">Catalyzes amidations at positions B, D, E, and G on adenosylcobyrinic A,C-diamide. NH(2) groups are provided by glutamine, and one molecule of ATP is hydrogenolyzed for each amidation.</text>
</comment>
<comment type="pathway">
    <text evidence="1">Cofactor biosynthesis; adenosylcobalamin biosynthesis.</text>
</comment>
<comment type="similarity">
    <text evidence="1">Belongs to the CobB/CobQ family. CobQ subfamily.</text>
</comment>
<keyword id="KW-0169">Cobalamin biosynthesis</keyword>
<keyword id="KW-0315">Glutamine amidotransferase</keyword>
<reference key="1">
    <citation type="submission" date="2006-09" db="EMBL/GenBank/DDBJ databases">
        <authorList>
            <consortium name="The Klebsiella pneumonia Genome Sequencing Project"/>
            <person name="McClelland M."/>
            <person name="Sanderson E.K."/>
            <person name="Spieth J."/>
            <person name="Clifton W.S."/>
            <person name="Latreille P."/>
            <person name="Sabo A."/>
            <person name="Pepin K."/>
            <person name="Bhonagiri V."/>
            <person name="Porwollik S."/>
            <person name="Ali J."/>
            <person name="Wilson R.K."/>
        </authorList>
    </citation>
    <scope>NUCLEOTIDE SEQUENCE [LARGE SCALE GENOMIC DNA]</scope>
    <source>
        <strain>ATCC 700721 / MGH 78578</strain>
    </source>
</reference>
<feature type="chain" id="PRO_1000002361" description="Cobyric acid synthase">
    <location>
        <begin position="1"/>
        <end position="507"/>
    </location>
</feature>
<feature type="domain" description="GATase cobBQ-type" evidence="1">
    <location>
        <begin position="251"/>
        <end position="448"/>
    </location>
</feature>
<feature type="active site" description="Nucleophile" evidence="1">
    <location>
        <position position="332"/>
    </location>
</feature>
<feature type="active site" evidence="1">
    <location>
        <position position="440"/>
    </location>
</feature>
<dbReference type="EMBL" id="CP000647">
    <property type="protein sequence ID" value="ABR78582.1"/>
    <property type="molecule type" value="Genomic_DNA"/>
</dbReference>
<dbReference type="RefSeq" id="WP_004174595.1">
    <property type="nucleotide sequence ID" value="NC_009648.1"/>
</dbReference>
<dbReference type="STRING" id="272620.KPN_03184"/>
<dbReference type="PaxDb" id="272620-KPN_03184"/>
<dbReference type="EnsemblBacteria" id="ABR78582">
    <property type="protein sequence ID" value="ABR78582"/>
    <property type="gene ID" value="KPN_03184"/>
</dbReference>
<dbReference type="KEGG" id="kpn:KPN_03184"/>
<dbReference type="HOGENOM" id="CLU_019250_2_2_6"/>
<dbReference type="UniPathway" id="UPA00148"/>
<dbReference type="Proteomes" id="UP000000265">
    <property type="component" value="Chromosome"/>
</dbReference>
<dbReference type="GO" id="GO:0015420">
    <property type="term" value="F:ABC-type vitamin B12 transporter activity"/>
    <property type="evidence" value="ECO:0007669"/>
    <property type="project" value="UniProtKB-UniRule"/>
</dbReference>
<dbReference type="GO" id="GO:0003824">
    <property type="term" value="F:catalytic activity"/>
    <property type="evidence" value="ECO:0007669"/>
    <property type="project" value="InterPro"/>
</dbReference>
<dbReference type="GO" id="GO:0009236">
    <property type="term" value="P:cobalamin biosynthetic process"/>
    <property type="evidence" value="ECO:0007669"/>
    <property type="project" value="UniProtKB-UniRule"/>
</dbReference>
<dbReference type="CDD" id="cd05389">
    <property type="entry name" value="CobQ_N"/>
    <property type="match status" value="1"/>
</dbReference>
<dbReference type="CDD" id="cd01750">
    <property type="entry name" value="GATase1_CobQ"/>
    <property type="match status" value="1"/>
</dbReference>
<dbReference type="Gene3D" id="3.40.50.880">
    <property type="match status" value="1"/>
</dbReference>
<dbReference type="Gene3D" id="3.40.50.300">
    <property type="entry name" value="P-loop containing nucleotide triphosphate hydrolases"/>
    <property type="match status" value="1"/>
</dbReference>
<dbReference type="HAMAP" id="MF_00028">
    <property type="entry name" value="CobQ"/>
    <property type="match status" value="1"/>
</dbReference>
<dbReference type="InterPro" id="IPR029062">
    <property type="entry name" value="Class_I_gatase-like"/>
</dbReference>
<dbReference type="InterPro" id="IPR002586">
    <property type="entry name" value="CobQ/CobB/MinD/ParA_Nub-bd_dom"/>
</dbReference>
<dbReference type="InterPro" id="IPR033949">
    <property type="entry name" value="CobQ_GATase1"/>
</dbReference>
<dbReference type="InterPro" id="IPR047045">
    <property type="entry name" value="CobQ_N"/>
</dbReference>
<dbReference type="InterPro" id="IPR004459">
    <property type="entry name" value="CobQ_synth"/>
</dbReference>
<dbReference type="InterPro" id="IPR011698">
    <property type="entry name" value="GATase_3"/>
</dbReference>
<dbReference type="InterPro" id="IPR027417">
    <property type="entry name" value="P-loop_NTPase"/>
</dbReference>
<dbReference type="NCBIfam" id="TIGR00313">
    <property type="entry name" value="cobQ"/>
    <property type="match status" value="1"/>
</dbReference>
<dbReference type="NCBIfam" id="NF001989">
    <property type="entry name" value="PRK00784.1"/>
    <property type="match status" value="1"/>
</dbReference>
<dbReference type="PANTHER" id="PTHR21343:SF1">
    <property type="entry name" value="COBYRIC ACID SYNTHASE"/>
    <property type="match status" value="1"/>
</dbReference>
<dbReference type="PANTHER" id="PTHR21343">
    <property type="entry name" value="DETHIOBIOTIN SYNTHETASE"/>
    <property type="match status" value="1"/>
</dbReference>
<dbReference type="Pfam" id="PF01656">
    <property type="entry name" value="CbiA"/>
    <property type="match status" value="1"/>
</dbReference>
<dbReference type="Pfam" id="PF07685">
    <property type="entry name" value="GATase_3"/>
    <property type="match status" value="1"/>
</dbReference>
<dbReference type="SUPFAM" id="SSF52317">
    <property type="entry name" value="Class I glutamine amidotransferase-like"/>
    <property type="match status" value="1"/>
</dbReference>
<dbReference type="SUPFAM" id="SSF52540">
    <property type="entry name" value="P-loop containing nucleoside triphosphate hydrolases"/>
    <property type="match status" value="1"/>
</dbReference>
<dbReference type="PROSITE" id="PS51274">
    <property type="entry name" value="GATASE_COBBQ"/>
    <property type="match status" value="1"/>
</dbReference>
<organism>
    <name type="scientific">Klebsiella pneumoniae subsp. pneumoniae (strain ATCC 700721 / MGH 78578)</name>
    <dbReference type="NCBI Taxonomy" id="272620"/>
    <lineage>
        <taxon>Bacteria</taxon>
        <taxon>Pseudomonadati</taxon>
        <taxon>Pseudomonadota</taxon>
        <taxon>Gammaproteobacteria</taxon>
        <taxon>Enterobacterales</taxon>
        <taxon>Enterobacteriaceae</taxon>
        <taxon>Klebsiella/Raoultella group</taxon>
        <taxon>Klebsiella</taxon>
        <taxon>Klebsiella pneumoniae complex</taxon>
    </lineage>
</organism>
<sequence length="507" mass="55098">MTLAVMLQGTASDVGKSVLVAGLCRIFHQDGLRTAPFKSQNMALNSGITPDGKEMGRAQIFQAEAAGIAPDVRMNPILLKPTSDRQAQVVLMGQVATSMDAVSYHQYKPRLREQILAVYQSLAGEYEALVLEGAGSPAEINLRDRDIVNMGMAEMAQCPVILVADIDRGGVFAAIYGTLALLQPQERARVKGVIINKFRGDVALLRSGIEQIEALTGVPVLGVMPWLDVDLEDEDGVALQAGKYHRTDRRDIDIAVVHLPHIANFTDFNALAAQPDVRVRYVRDPQALADADLVILPGSKNTLGDLCWLRESGMAHAVEQARQRKVPLLGICGGYQMLGETIIDEVESGLGAQPGLGVLKTVTHFAQHKTTTQVQATLGSALPDWLADAAGLRVSGYEIHMGETRREAGCPPLLQLHKAGQAVDDGAISDDGLAFGTYLHGLFDSDAFTRALLNGLRQRKGLAPLDSALEYARYKTRQFDRLAEAMREHIAIDKIYAIMRQHQEPLC</sequence>
<protein>
    <recommendedName>
        <fullName evidence="1">Cobyric acid synthase</fullName>
    </recommendedName>
</protein>
<proteinExistence type="inferred from homology"/>
<gene>
    <name evidence="1" type="primary">cobQ</name>
    <name type="ordered locus">KPN78578_31210</name>
    <name type="ORF">KPN_03184</name>
</gene>
<evidence type="ECO:0000255" key="1">
    <source>
        <dbReference type="HAMAP-Rule" id="MF_00028"/>
    </source>
</evidence>
<accession>A6TDB1</accession>
<name>COBQ_KLEP7</name>